<keyword id="KW-0997">Cell inner membrane</keyword>
<keyword id="KW-1003">Cell membrane</keyword>
<keyword id="KW-0249">Electron transport</keyword>
<keyword id="KW-0285">Flavoprotein</keyword>
<keyword id="KW-0288">FMN</keyword>
<keyword id="KW-0472">Membrane</keyword>
<keyword id="KW-0597">Phosphoprotein</keyword>
<keyword id="KW-1278">Translocase</keyword>
<keyword id="KW-0812">Transmembrane</keyword>
<keyword id="KW-1133">Transmembrane helix</keyword>
<keyword id="KW-0813">Transport</keyword>
<protein>
    <recommendedName>
        <fullName evidence="1">Ion-translocating oxidoreductase complex subunit D</fullName>
        <ecNumber evidence="1">7.-.-.-</ecNumber>
    </recommendedName>
    <alternativeName>
        <fullName evidence="1">Rsx electron transport complex subunit D</fullName>
    </alternativeName>
</protein>
<reference key="1">
    <citation type="journal article" date="2009" name="PLoS Genet.">
        <title>Organised genome dynamics in the Escherichia coli species results in highly diverse adaptive paths.</title>
        <authorList>
            <person name="Touchon M."/>
            <person name="Hoede C."/>
            <person name="Tenaillon O."/>
            <person name="Barbe V."/>
            <person name="Baeriswyl S."/>
            <person name="Bidet P."/>
            <person name="Bingen E."/>
            <person name="Bonacorsi S."/>
            <person name="Bouchier C."/>
            <person name="Bouvet O."/>
            <person name="Calteau A."/>
            <person name="Chiapello H."/>
            <person name="Clermont O."/>
            <person name="Cruveiller S."/>
            <person name="Danchin A."/>
            <person name="Diard M."/>
            <person name="Dossat C."/>
            <person name="Karoui M.E."/>
            <person name="Frapy E."/>
            <person name="Garry L."/>
            <person name="Ghigo J.M."/>
            <person name="Gilles A.M."/>
            <person name="Johnson J."/>
            <person name="Le Bouguenec C."/>
            <person name="Lescat M."/>
            <person name="Mangenot S."/>
            <person name="Martinez-Jehanne V."/>
            <person name="Matic I."/>
            <person name="Nassif X."/>
            <person name="Oztas S."/>
            <person name="Petit M.A."/>
            <person name="Pichon C."/>
            <person name="Rouy Z."/>
            <person name="Ruf C.S."/>
            <person name="Schneider D."/>
            <person name="Tourret J."/>
            <person name="Vacherie B."/>
            <person name="Vallenet D."/>
            <person name="Medigue C."/>
            <person name="Rocha E.P.C."/>
            <person name="Denamur E."/>
        </authorList>
    </citation>
    <scope>NUCLEOTIDE SEQUENCE [LARGE SCALE GENOMIC DNA]</scope>
    <source>
        <strain>ATCC 35469 / DSM 13698 / BCRC 15582 / CCUG 18766 / IAM 14443 / JCM 21226 / LMG 7866 / NBRC 102419 / NCTC 12128 / CDC 0568-73</strain>
    </source>
</reference>
<evidence type="ECO:0000255" key="1">
    <source>
        <dbReference type="HAMAP-Rule" id="MF_00462"/>
    </source>
</evidence>
<name>RSXD_ESCF3</name>
<accession>B7LQP0</accession>
<feature type="chain" id="PRO_1000125386" description="Ion-translocating oxidoreductase complex subunit D">
    <location>
        <begin position="1"/>
        <end position="352"/>
    </location>
</feature>
<feature type="transmembrane region" description="Helical" evidence="1">
    <location>
        <begin position="20"/>
        <end position="40"/>
    </location>
</feature>
<feature type="transmembrane region" description="Helical" evidence="1">
    <location>
        <begin position="42"/>
        <end position="62"/>
    </location>
</feature>
<feature type="transmembrane region" description="Helical" evidence="1">
    <location>
        <begin position="68"/>
        <end position="88"/>
    </location>
</feature>
<feature type="transmembrane region" description="Helical" evidence="1">
    <location>
        <begin position="89"/>
        <end position="109"/>
    </location>
</feature>
<feature type="transmembrane region" description="Helical" evidence="1">
    <location>
        <begin position="123"/>
        <end position="143"/>
    </location>
</feature>
<feature type="transmembrane region" description="Helical" evidence="1">
    <location>
        <begin position="217"/>
        <end position="237"/>
    </location>
</feature>
<feature type="transmembrane region" description="Helical" evidence="1">
    <location>
        <begin position="244"/>
        <end position="264"/>
    </location>
</feature>
<feature type="transmembrane region" description="Helical" evidence="1">
    <location>
        <begin position="267"/>
        <end position="287"/>
    </location>
</feature>
<feature type="transmembrane region" description="Helical" evidence="1">
    <location>
        <begin position="301"/>
        <end position="321"/>
    </location>
</feature>
<feature type="transmembrane region" description="Helical" evidence="1">
    <location>
        <begin position="322"/>
        <end position="342"/>
    </location>
</feature>
<feature type="modified residue" description="FMN phosphoryl threonine" evidence="1">
    <location>
        <position position="187"/>
    </location>
</feature>
<gene>
    <name evidence="1" type="primary">rsxD</name>
    <name type="ordered locus">EFER_1413</name>
</gene>
<comment type="function">
    <text evidence="1">Part of a membrane-bound complex that couples electron transfer with translocation of ions across the membrane. Required to maintain the reduced state of SoxR.</text>
</comment>
<comment type="cofactor">
    <cofactor evidence="1">
        <name>FMN</name>
        <dbReference type="ChEBI" id="CHEBI:58210"/>
    </cofactor>
</comment>
<comment type="subunit">
    <text evidence="1">The complex is composed of six subunits: RsxA, RsxB, RsxC, RsxD, RsxE and RsxG.</text>
</comment>
<comment type="subcellular location">
    <subcellularLocation>
        <location evidence="1">Cell inner membrane</location>
        <topology evidence="1">Multi-pass membrane protein</topology>
    </subcellularLocation>
</comment>
<comment type="similarity">
    <text evidence="1">Belongs to the NqrB/RnfD family.</text>
</comment>
<proteinExistence type="inferred from homology"/>
<dbReference type="EC" id="7.-.-.-" evidence="1"/>
<dbReference type="EMBL" id="CU928158">
    <property type="protein sequence ID" value="CAQ88933.1"/>
    <property type="molecule type" value="Genomic_DNA"/>
</dbReference>
<dbReference type="RefSeq" id="WP_000231900.1">
    <property type="nucleotide sequence ID" value="NC_011740.1"/>
</dbReference>
<dbReference type="SMR" id="B7LQP0"/>
<dbReference type="GeneID" id="75057541"/>
<dbReference type="KEGG" id="efe:EFER_1413"/>
<dbReference type="HOGENOM" id="CLU_042020_0_0_6"/>
<dbReference type="OrthoDB" id="9776359at2"/>
<dbReference type="Proteomes" id="UP000000745">
    <property type="component" value="Chromosome"/>
</dbReference>
<dbReference type="GO" id="GO:0005886">
    <property type="term" value="C:plasma membrane"/>
    <property type="evidence" value="ECO:0007669"/>
    <property type="project" value="UniProtKB-SubCell"/>
</dbReference>
<dbReference type="GO" id="GO:0022900">
    <property type="term" value="P:electron transport chain"/>
    <property type="evidence" value="ECO:0007669"/>
    <property type="project" value="UniProtKB-UniRule"/>
</dbReference>
<dbReference type="GO" id="GO:0055085">
    <property type="term" value="P:transmembrane transport"/>
    <property type="evidence" value="ECO:0007669"/>
    <property type="project" value="InterPro"/>
</dbReference>
<dbReference type="HAMAP" id="MF_00462">
    <property type="entry name" value="RsxD_RnfD"/>
    <property type="match status" value="1"/>
</dbReference>
<dbReference type="InterPro" id="IPR004338">
    <property type="entry name" value="NqrB/RnfD"/>
</dbReference>
<dbReference type="InterPro" id="IPR011303">
    <property type="entry name" value="RnfD_bac"/>
</dbReference>
<dbReference type="NCBIfam" id="NF002011">
    <property type="entry name" value="PRK00816.1"/>
    <property type="match status" value="1"/>
</dbReference>
<dbReference type="NCBIfam" id="TIGR01946">
    <property type="entry name" value="rnfD"/>
    <property type="match status" value="1"/>
</dbReference>
<dbReference type="PANTHER" id="PTHR30578">
    <property type="entry name" value="ELECTRON TRANSPORT COMPLEX PROTEIN RNFD"/>
    <property type="match status" value="1"/>
</dbReference>
<dbReference type="PANTHER" id="PTHR30578:SF0">
    <property type="entry name" value="ION-TRANSLOCATING OXIDOREDUCTASE COMPLEX SUBUNIT D"/>
    <property type="match status" value="1"/>
</dbReference>
<dbReference type="Pfam" id="PF03116">
    <property type="entry name" value="NQR2_RnfD_RnfE"/>
    <property type="match status" value="1"/>
</dbReference>
<organism>
    <name type="scientific">Escherichia fergusonii (strain ATCC 35469 / DSM 13698 / CCUG 18766 / IAM 14443 / JCM 21226 / LMG 7866 / NBRC 102419 / NCTC 12128 / CDC 0568-73)</name>
    <dbReference type="NCBI Taxonomy" id="585054"/>
    <lineage>
        <taxon>Bacteria</taxon>
        <taxon>Pseudomonadati</taxon>
        <taxon>Pseudomonadota</taxon>
        <taxon>Gammaproteobacteria</taxon>
        <taxon>Enterobacterales</taxon>
        <taxon>Enterobacteriaceae</taxon>
        <taxon>Escherichia</taxon>
    </lineage>
</organism>
<sequence length="352" mass="38039">MVFRIASSPYTHNQRQTSRIMLLVLLAAIPGIATQLWFFGWGTLVQIILAVISALSAEALVLKLRNQPIAAILKDNSALLTGLLLAVSIPPLAPWWMVVLGTVFAVIIAKQLYGGLGQNPFNPAMIGYVVLLISFPVQMTNWLPPYEIAATVPGMADTLQVIFTGHTTSGGDMSTLRMGIDGISQATPLDTLKTSLHSGRSVEQIMQYPIFSGMLAGAGWQWVNLAWLAGGVWLLAIKVIRWHIPVSFLVSLALCATLGWLFAPESLASPQIHMLSGATMLGAFFILTDPVTASTTNRGRLIFGALAGVLVWLIRSFGGYPDGVAFAVLLANITVPLIDYYTRPRVYGHRKG</sequence>